<protein>
    <recommendedName>
        <fullName evidence="1">[Ribosomal protein bS18]-alanine N-acetyltransferase</fullName>
        <ecNumber evidence="1">2.3.1.266</ecNumber>
    </recommendedName>
</protein>
<gene>
    <name evidence="1" type="primary">rimI</name>
    <name type="ordered locus">Z5974</name>
    <name type="ordered locus">ECs5331</name>
</gene>
<feature type="chain" id="PRO_0000074562" description="[Ribosomal protein bS18]-alanine N-acetyltransferase">
    <location>
        <begin position="1"/>
        <end position="148"/>
    </location>
</feature>
<feature type="domain" description="N-acetyltransferase" evidence="1">
    <location>
        <begin position="2"/>
        <end position="147"/>
    </location>
</feature>
<feature type="active site" description="Proton acceptor" evidence="1">
    <location>
        <position position="103"/>
    </location>
</feature>
<feature type="active site" description="Proton donor" evidence="1">
    <location>
        <position position="115"/>
    </location>
</feature>
<feature type="binding site" evidence="1">
    <location>
        <begin position="69"/>
        <end position="71"/>
    </location>
    <ligand>
        <name>acetyl-CoA</name>
        <dbReference type="ChEBI" id="CHEBI:57288"/>
    </ligand>
</feature>
<feature type="binding site" evidence="1">
    <location>
        <position position="108"/>
    </location>
    <ligand>
        <name>acetyl-CoA</name>
        <dbReference type="ChEBI" id="CHEBI:57288"/>
    </ligand>
</feature>
<feature type="strand" evidence="3">
    <location>
        <begin position="2"/>
        <end position="6"/>
    </location>
</feature>
<feature type="helix" evidence="3">
    <location>
        <begin position="9"/>
        <end position="11"/>
    </location>
</feature>
<feature type="helix" evidence="3">
    <location>
        <begin position="12"/>
        <end position="22"/>
    </location>
</feature>
<feature type="helix" evidence="3">
    <location>
        <begin position="29"/>
        <end position="34"/>
    </location>
</feature>
<feature type="strand" evidence="3">
    <location>
        <begin position="43"/>
        <end position="47"/>
    </location>
</feature>
<feature type="strand" evidence="3">
    <location>
        <begin position="50"/>
        <end position="60"/>
    </location>
</feature>
<feature type="strand" evidence="3">
    <location>
        <begin position="63"/>
        <end position="71"/>
    </location>
</feature>
<feature type="helix" evidence="3">
    <location>
        <begin position="73"/>
        <end position="75"/>
    </location>
</feature>
<feature type="helix" evidence="3">
    <location>
        <begin position="80"/>
        <end position="94"/>
    </location>
</feature>
<feature type="strand" evidence="3">
    <location>
        <begin position="99"/>
        <end position="105"/>
    </location>
</feature>
<feature type="helix" evidence="3">
    <location>
        <begin position="109"/>
        <end position="117"/>
    </location>
</feature>
<feature type="strand" evidence="3">
    <location>
        <begin position="121"/>
        <end position="131"/>
    </location>
</feature>
<feature type="strand" evidence="3">
    <location>
        <begin position="133"/>
        <end position="145"/>
    </location>
</feature>
<proteinExistence type="evidence at protein level"/>
<organism>
    <name type="scientific">Escherichia coli O157:H7</name>
    <dbReference type="NCBI Taxonomy" id="83334"/>
    <lineage>
        <taxon>Bacteria</taxon>
        <taxon>Pseudomonadati</taxon>
        <taxon>Pseudomonadota</taxon>
        <taxon>Gammaproteobacteria</taxon>
        <taxon>Enterobacterales</taxon>
        <taxon>Enterobacteriaceae</taxon>
        <taxon>Escherichia</taxon>
    </lineage>
</organism>
<evidence type="ECO:0000255" key="1">
    <source>
        <dbReference type="HAMAP-Rule" id="MF_02210"/>
    </source>
</evidence>
<evidence type="ECO:0000305" key="2"/>
<evidence type="ECO:0007829" key="3">
    <source>
        <dbReference type="PDB" id="5ISV"/>
    </source>
</evidence>
<name>RIMI_ECO57</name>
<reference key="1">
    <citation type="journal article" date="2001" name="Nature">
        <title>Genome sequence of enterohaemorrhagic Escherichia coli O157:H7.</title>
        <authorList>
            <person name="Perna N.T."/>
            <person name="Plunkett G. III"/>
            <person name="Burland V."/>
            <person name="Mau B."/>
            <person name="Glasner J.D."/>
            <person name="Rose D.J."/>
            <person name="Mayhew G.F."/>
            <person name="Evans P.S."/>
            <person name="Gregor J."/>
            <person name="Kirkpatrick H.A."/>
            <person name="Posfai G."/>
            <person name="Hackett J."/>
            <person name="Klink S."/>
            <person name="Boutin A."/>
            <person name="Shao Y."/>
            <person name="Miller L."/>
            <person name="Grotbeck E.J."/>
            <person name="Davis N.W."/>
            <person name="Lim A."/>
            <person name="Dimalanta E.T."/>
            <person name="Potamousis K."/>
            <person name="Apodaca J."/>
            <person name="Anantharaman T.S."/>
            <person name="Lin J."/>
            <person name="Yen G."/>
            <person name="Schwartz D.C."/>
            <person name="Welch R.A."/>
            <person name="Blattner F.R."/>
        </authorList>
    </citation>
    <scope>NUCLEOTIDE SEQUENCE [LARGE SCALE GENOMIC DNA]</scope>
    <source>
        <strain>O157:H7 / EDL933 / ATCC 700927 / EHEC</strain>
    </source>
</reference>
<reference key="2">
    <citation type="journal article" date="2001" name="DNA Res.">
        <title>Complete genome sequence of enterohemorrhagic Escherichia coli O157:H7 and genomic comparison with a laboratory strain K-12.</title>
        <authorList>
            <person name="Hayashi T."/>
            <person name="Makino K."/>
            <person name="Ohnishi M."/>
            <person name="Kurokawa K."/>
            <person name="Ishii K."/>
            <person name="Yokoyama K."/>
            <person name="Han C.-G."/>
            <person name="Ohtsubo E."/>
            <person name="Nakayama K."/>
            <person name="Murata T."/>
            <person name="Tanaka M."/>
            <person name="Tobe T."/>
            <person name="Iida T."/>
            <person name="Takami H."/>
            <person name="Honda T."/>
            <person name="Sasakawa C."/>
            <person name="Ogasawara N."/>
            <person name="Yasunaga T."/>
            <person name="Kuhara S."/>
            <person name="Shiba T."/>
            <person name="Hattori M."/>
            <person name="Shinagawa H."/>
        </authorList>
    </citation>
    <scope>NUCLEOTIDE SEQUENCE [LARGE SCALE GENOMIC DNA]</scope>
    <source>
        <strain>O157:H7 / Sakai / RIMD 0509952 / EHEC</strain>
    </source>
</reference>
<reference key="3">
    <citation type="submission" date="2016-03" db="PDB data bank">
        <title>Crystal structure of the ribosomal-protein-S18-alanine N-acetyltransferase from Escherichia coli.</title>
        <authorList>
            <consortium name="Center for Structural Genomics of Infectious Diseases (CSGID)"/>
            <person name="Filippova E.V."/>
            <person name="Minasov G."/>
            <person name="Kiryukhina O."/>
            <person name="Shuvalova L."/>
            <person name="Grimshaw S."/>
            <person name="Wolfe A.J."/>
            <person name="Anderson W.F."/>
        </authorList>
    </citation>
    <scope>X-RAY CRYSTALLOGRAPHY (1.35 ANGSTROMS)</scope>
    <source>
        <strain>O157:H7 / EHEC</strain>
    </source>
</reference>
<accession>P0A946</accession>
<accession>P09453</accession>
<sequence>MNTISSLETTDLPAAYHIEQRAHAFPWSEKTFASNQGERYLNFQLTQNGKMAAFAITQVVLDEATLFNIAVDPDYQRQGLGRALLEHLIDELEKRGVATLWLEVRASNAAAIALYESLGFNEATIRRNYYPTTDGREDAIIMALPISM</sequence>
<comment type="function">
    <text evidence="1">Acetylates the N-terminal alanine of ribosomal protein bS18.</text>
</comment>
<comment type="catalytic activity">
    <reaction evidence="1">
        <text>N-terminal L-alanyl-[ribosomal protein bS18] + acetyl-CoA = N-terminal N(alpha)-acetyl-L-alanyl-[ribosomal protein bS18] + CoA + H(+)</text>
        <dbReference type="Rhea" id="RHEA:43756"/>
        <dbReference type="Rhea" id="RHEA-COMP:10676"/>
        <dbReference type="Rhea" id="RHEA-COMP:10677"/>
        <dbReference type="ChEBI" id="CHEBI:15378"/>
        <dbReference type="ChEBI" id="CHEBI:57287"/>
        <dbReference type="ChEBI" id="CHEBI:57288"/>
        <dbReference type="ChEBI" id="CHEBI:64718"/>
        <dbReference type="ChEBI" id="CHEBI:83683"/>
        <dbReference type="EC" id="2.3.1.266"/>
    </reaction>
</comment>
<comment type="subcellular location">
    <subcellularLocation>
        <location evidence="1">Cytoplasm</location>
    </subcellularLocation>
</comment>
<comment type="similarity">
    <text evidence="1 2">Belongs to the acetyltransferase family. RimI subfamily.</text>
</comment>
<dbReference type="EC" id="2.3.1.266" evidence="1"/>
<dbReference type="EMBL" id="AE005174">
    <property type="protein sequence ID" value="AAG59553.1"/>
    <property type="molecule type" value="Genomic_DNA"/>
</dbReference>
<dbReference type="EMBL" id="BA000007">
    <property type="protein sequence ID" value="BAB38754.1"/>
    <property type="molecule type" value="Genomic_DNA"/>
</dbReference>
<dbReference type="PIR" id="C91295">
    <property type="entry name" value="C91295"/>
</dbReference>
<dbReference type="PIR" id="E86136">
    <property type="entry name" value="E86136"/>
</dbReference>
<dbReference type="RefSeq" id="NP_313358.1">
    <property type="nucleotide sequence ID" value="NC_002695.1"/>
</dbReference>
<dbReference type="RefSeq" id="WP_001092461.1">
    <property type="nucleotide sequence ID" value="NZ_VOAI01000002.1"/>
</dbReference>
<dbReference type="PDB" id="5ISV">
    <property type="method" value="X-ray"/>
    <property type="resolution" value="1.35 A"/>
    <property type="chains" value="A/B=1-148"/>
</dbReference>
<dbReference type="PDBsum" id="5ISV"/>
<dbReference type="SMR" id="P0A946"/>
<dbReference type="STRING" id="155864.Z5974"/>
<dbReference type="DNASU" id="959682"/>
<dbReference type="GeneID" id="75202945"/>
<dbReference type="GeneID" id="913548"/>
<dbReference type="KEGG" id="ece:Z5974"/>
<dbReference type="KEGG" id="ecs:ECs_5331"/>
<dbReference type="PATRIC" id="fig|386585.9.peg.5575"/>
<dbReference type="eggNOG" id="COG0456">
    <property type="taxonomic scope" value="Bacteria"/>
</dbReference>
<dbReference type="HOGENOM" id="CLU_013985_23_2_6"/>
<dbReference type="OMA" id="GERYLNY"/>
<dbReference type="Proteomes" id="UP000000558">
    <property type="component" value="Chromosome"/>
</dbReference>
<dbReference type="Proteomes" id="UP000002519">
    <property type="component" value="Chromosome"/>
</dbReference>
<dbReference type="GO" id="GO:0005737">
    <property type="term" value="C:cytoplasm"/>
    <property type="evidence" value="ECO:0007669"/>
    <property type="project" value="UniProtKB-SubCell"/>
</dbReference>
<dbReference type="GO" id="GO:0008999">
    <property type="term" value="F:protein-N-terminal-alanine acetyltransferase activity"/>
    <property type="evidence" value="ECO:0007669"/>
    <property type="project" value="UniProtKB-UniRule"/>
</dbReference>
<dbReference type="CDD" id="cd04301">
    <property type="entry name" value="NAT_SF"/>
    <property type="match status" value="1"/>
</dbReference>
<dbReference type="FunFam" id="3.40.630.30:FF:000018">
    <property type="entry name" value="[Ribosomal protein S18]-alanine N-acetyltransferase"/>
    <property type="match status" value="1"/>
</dbReference>
<dbReference type="Gene3D" id="3.40.630.30">
    <property type="match status" value="1"/>
</dbReference>
<dbReference type="HAMAP" id="MF_02210">
    <property type="entry name" value="RimI"/>
    <property type="match status" value="1"/>
</dbReference>
<dbReference type="InterPro" id="IPR006464">
    <property type="entry name" value="AcTrfase_RimI/Ard1"/>
</dbReference>
<dbReference type="InterPro" id="IPR016181">
    <property type="entry name" value="Acyl_CoA_acyltransferase"/>
</dbReference>
<dbReference type="InterPro" id="IPR000182">
    <property type="entry name" value="GNAT_dom"/>
</dbReference>
<dbReference type="InterPro" id="IPR043690">
    <property type="entry name" value="RimI"/>
</dbReference>
<dbReference type="InterPro" id="IPR050680">
    <property type="entry name" value="YpeA/RimI_acetyltransf"/>
</dbReference>
<dbReference type="NCBIfam" id="NF007025">
    <property type="entry name" value="PRK09491.1"/>
    <property type="match status" value="1"/>
</dbReference>
<dbReference type="NCBIfam" id="TIGR01575">
    <property type="entry name" value="rimI"/>
    <property type="match status" value="1"/>
</dbReference>
<dbReference type="PANTHER" id="PTHR43420">
    <property type="entry name" value="ACETYLTRANSFERASE"/>
    <property type="match status" value="1"/>
</dbReference>
<dbReference type="PANTHER" id="PTHR43420:SF51">
    <property type="entry name" value="PEPTIDYL-LYSINE N-ACETYLTRANSFERASE YIAC"/>
    <property type="match status" value="1"/>
</dbReference>
<dbReference type="Pfam" id="PF00583">
    <property type="entry name" value="Acetyltransf_1"/>
    <property type="match status" value="1"/>
</dbReference>
<dbReference type="SUPFAM" id="SSF55729">
    <property type="entry name" value="Acyl-CoA N-acyltransferases (Nat)"/>
    <property type="match status" value="1"/>
</dbReference>
<dbReference type="PROSITE" id="PS51186">
    <property type="entry name" value="GNAT"/>
    <property type="match status" value="1"/>
</dbReference>
<keyword id="KW-0002">3D-structure</keyword>
<keyword id="KW-0012">Acyltransferase</keyword>
<keyword id="KW-0963">Cytoplasm</keyword>
<keyword id="KW-1185">Reference proteome</keyword>
<keyword id="KW-0808">Transferase</keyword>